<sequence length="331" mass="37705">MDPGTLNSVINRLLEAREKPGKIVQLSETEIKQLCFVSRDIFLRQPNLLELEAPVKICGDIHGQYPDLLRLFEHGGYPPNSNYLFLGDYVDRGKQSLETICLLLAYKIKFPENFFLLRGNHESASINRIYGFYDECKRRFSVKIWRIFTDCFNCLPVAALIDERIFCMHGGLSPELLSLRQIRDIRRPTDIPDRGLLCDLLWSDPDKDVRGWGPNDRGVSYTFGSDIVSGFLKRLDLDLICRAHQVVEDGFEFFANKQLVTIFSAPNYCGEFDNAGAMMSVSEDLTCSFQILKSNDKKSKFSFGSRGGAKTSFPYPKVKSILSSQNSKEYN</sequence>
<dbReference type="EC" id="3.1.3.16" evidence="4"/>
<dbReference type="EMBL" id="AB000094">
    <property type="protein sequence ID" value="BAA24283.1"/>
    <property type="molecule type" value="Genomic_DNA"/>
</dbReference>
<dbReference type="EMBL" id="U80920">
    <property type="protein sequence ID" value="AAC39459.1"/>
    <property type="status" value="ALT_FRAME"/>
    <property type="molecule type" value="mRNA"/>
</dbReference>
<dbReference type="EMBL" id="AB025638">
    <property type="protein sequence ID" value="BAA97417.1"/>
    <property type="molecule type" value="Genomic_DNA"/>
</dbReference>
<dbReference type="EMBL" id="CP002688">
    <property type="protein sequence ID" value="AED94952.1"/>
    <property type="molecule type" value="Genomic_DNA"/>
</dbReference>
<dbReference type="EMBL" id="CP002688">
    <property type="protein sequence ID" value="AED94953.1"/>
    <property type="molecule type" value="Genomic_DNA"/>
</dbReference>
<dbReference type="EMBL" id="CP002688">
    <property type="protein sequence ID" value="AED94954.1"/>
    <property type="molecule type" value="Genomic_DNA"/>
</dbReference>
<dbReference type="EMBL" id="AY136464">
    <property type="protein sequence ID" value="AAM97129.1"/>
    <property type="molecule type" value="mRNA"/>
</dbReference>
<dbReference type="EMBL" id="BT002143">
    <property type="protein sequence ID" value="AAN72154.1"/>
    <property type="molecule type" value="mRNA"/>
</dbReference>
<dbReference type="RefSeq" id="NP_001032000.1">
    <molecule id="O82733-3"/>
    <property type="nucleotide sequence ID" value="NM_001036923.1"/>
</dbReference>
<dbReference type="RefSeq" id="NP_568625.1">
    <molecule id="O82733-2"/>
    <property type="nucleotide sequence ID" value="NM_123704.3"/>
</dbReference>
<dbReference type="RefSeq" id="NP_851123.1">
    <molecule id="O82733-1"/>
    <property type="nucleotide sequence ID" value="NM_180792.3"/>
</dbReference>
<dbReference type="SMR" id="O82733"/>
<dbReference type="BioGRID" id="19606">
    <property type="interactions" value="4"/>
</dbReference>
<dbReference type="IntAct" id="O82733">
    <property type="interactions" value="3"/>
</dbReference>
<dbReference type="STRING" id="3702.O82733"/>
<dbReference type="PaxDb" id="3702-AT5G43380.1"/>
<dbReference type="ProteomicsDB" id="249148">
    <molecule id="O82733-1"/>
</dbReference>
<dbReference type="EnsemblPlants" id="AT5G43380.1">
    <molecule id="O82733-1"/>
    <property type="protein sequence ID" value="AT5G43380.1"/>
    <property type="gene ID" value="AT5G43380"/>
</dbReference>
<dbReference type="EnsemblPlants" id="AT5G43380.2">
    <molecule id="O82733-2"/>
    <property type="protein sequence ID" value="AT5G43380.2"/>
    <property type="gene ID" value="AT5G43380"/>
</dbReference>
<dbReference type="EnsemblPlants" id="AT5G43380.3">
    <molecule id="O82733-3"/>
    <property type="protein sequence ID" value="AT5G43380.3"/>
    <property type="gene ID" value="AT5G43380"/>
</dbReference>
<dbReference type="GeneID" id="834356"/>
<dbReference type="Gramene" id="AT5G43380.1">
    <molecule id="O82733-1"/>
    <property type="protein sequence ID" value="AT5G43380.1"/>
    <property type="gene ID" value="AT5G43380"/>
</dbReference>
<dbReference type="Gramene" id="AT5G43380.2">
    <molecule id="O82733-2"/>
    <property type="protein sequence ID" value="AT5G43380.2"/>
    <property type="gene ID" value="AT5G43380"/>
</dbReference>
<dbReference type="Gramene" id="AT5G43380.3">
    <molecule id="O82733-3"/>
    <property type="protein sequence ID" value="AT5G43380.3"/>
    <property type="gene ID" value="AT5G43380"/>
</dbReference>
<dbReference type="KEGG" id="ath:AT5G43380"/>
<dbReference type="Araport" id="AT5G43380"/>
<dbReference type="TAIR" id="AT5G43380">
    <property type="gene designation" value="TOPP6"/>
</dbReference>
<dbReference type="eggNOG" id="KOG0374">
    <property type="taxonomic scope" value="Eukaryota"/>
</dbReference>
<dbReference type="InParanoid" id="O82733"/>
<dbReference type="OMA" id="MGWSDND"/>
<dbReference type="PhylomeDB" id="O82733"/>
<dbReference type="PRO" id="PR:O82733"/>
<dbReference type="Proteomes" id="UP000006548">
    <property type="component" value="Chromosome 5"/>
</dbReference>
<dbReference type="ExpressionAtlas" id="O82733">
    <property type="expression patterns" value="baseline and differential"/>
</dbReference>
<dbReference type="GO" id="GO:0005737">
    <property type="term" value="C:cytoplasm"/>
    <property type="evidence" value="ECO:0007669"/>
    <property type="project" value="UniProtKB-SubCell"/>
</dbReference>
<dbReference type="GO" id="GO:0005634">
    <property type="term" value="C:nucleus"/>
    <property type="evidence" value="ECO:0007669"/>
    <property type="project" value="UniProtKB-SubCell"/>
</dbReference>
<dbReference type="GO" id="GO:0046872">
    <property type="term" value="F:metal ion binding"/>
    <property type="evidence" value="ECO:0007669"/>
    <property type="project" value="UniProtKB-KW"/>
</dbReference>
<dbReference type="GO" id="GO:0004722">
    <property type="term" value="F:protein serine/threonine phosphatase activity"/>
    <property type="evidence" value="ECO:0007669"/>
    <property type="project" value="UniProtKB-EC"/>
</dbReference>
<dbReference type="CDD" id="cd07414">
    <property type="entry name" value="MPP_PP1_PPKL"/>
    <property type="match status" value="1"/>
</dbReference>
<dbReference type="FunFam" id="3.60.21.10:FF:000026">
    <property type="entry name" value="Serine/threonine-protein phosphatase"/>
    <property type="match status" value="1"/>
</dbReference>
<dbReference type="Gene3D" id="3.60.21.10">
    <property type="match status" value="1"/>
</dbReference>
<dbReference type="InterPro" id="IPR004843">
    <property type="entry name" value="Calcineurin-like_PHP_ApaH"/>
</dbReference>
<dbReference type="InterPro" id="IPR029052">
    <property type="entry name" value="Metallo-depent_PP-like"/>
</dbReference>
<dbReference type="InterPro" id="IPR050341">
    <property type="entry name" value="PP1_catalytic_subunit"/>
</dbReference>
<dbReference type="InterPro" id="IPR006186">
    <property type="entry name" value="Ser/Thr-sp_prot-phosphatase"/>
</dbReference>
<dbReference type="InterPro" id="IPR031675">
    <property type="entry name" value="STPPase_N"/>
</dbReference>
<dbReference type="PANTHER" id="PTHR11668">
    <property type="entry name" value="SERINE/THREONINE PROTEIN PHOSPHATASE"/>
    <property type="match status" value="1"/>
</dbReference>
<dbReference type="PANTHER" id="PTHR11668:SF500">
    <property type="entry name" value="SERINE_THREONINE-PROTEIN PHOSPHATASE PP1 ISOZYME 7"/>
    <property type="match status" value="1"/>
</dbReference>
<dbReference type="Pfam" id="PF00149">
    <property type="entry name" value="Metallophos"/>
    <property type="match status" value="1"/>
</dbReference>
<dbReference type="Pfam" id="PF16891">
    <property type="entry name" value="STPPase_N"/>
    <property type="match status" value="1"/>
</dbReference>
<dbReference type="PRINTS" id="PR00114">
    <property type="entry name" value="STPHPHTASE"/>
</dbReference>
<dbReference type="SMART" id="SM00156">
    <property type="entry name" value="PP2Ac"/>
    <property type="match status" value="1"/>
</dbReference>
<dbReference type="SUPFAM" id="SSF56300">
    <property type="entry name" value="Metallo-dependent phosphatases"/>
    <property type="match status" value="1"/>
</dbReference>
<dbReference type="PROSITE" id="PS00125">
    <property type="entry name" value="SER_THR_PHOSPHATASE"/>
    <property type="match status" value="1"/>
</dbReference>
<keyword id="KW-0007">Acetylation</keyword>
<keyword id="KW-0025">Alternative splicing</keyword>
<keyword id="KW-0963">Cytoplasm</keyword>
<keyword id="KW-0378">Hydrolase</keyword>
<keyword id="KW-0464">Manganese</keyword>
<keyword id="KW-0479">Metal-binding</keyword>
<keyword id="KW-0539">Nucleus</keyword>
<keyword id="KW-0904">Protein phosphatase</keyword>
<keyword id="KW-1185">Reference proteome</keyword>
<protein>
    <recommendedName>
        <fullName evidence="8">Serine/threonine-protein phosphatase PP1 isozyme 7</fullName>
        <ecNumber evidence="4">3.1.3.16</ecNumber>
    </recommendedName>
    <alternativeName>
        <fullName evidence="5">Type one protein phosphatase 7</fullName>
    </alternativeName>
</protein>
<accession>O82733</accession>
<accession>O48641</accession>
<accession>Q2V319</accession>
<accession>Q8L761</accession>
<reference key="1">
    <citation type="journal article" date="1997" name="Soil Sci. Plant Nutr.">
        <title>Isolation of a gene that encode a protein phosphatase 1 catalytic subunit in Arabidopsis thaliana.</title>
        <authorList>
            <person name="Mitsukawa N."/>
            <person name="Okumura S."/>
            <person name="Shibata D."/>
        </authorList>
    </citation>
    <scope>NUCLEOTIDE SEQUENCE [GENOMIC DNA] (ISOFORM 2)</scope>
    <source>
        <strain>cv. Columbia</strain>
    </source>
</reference>
<reference key="2">
    <citation type="journal article" date="1998" name="Plant Mol. Biol.">
        <title>Molecular cloning and chromosomal mapping of type one serine/threonine protein phosphatases in Arabidopsis thaliana.</title>
        <authorList>
            <person name="Lin Q."/>
            <person name="Li J."/>
            <person name="Smith R.D."/>
            <person name="Walker J.C."/>
        </authorList>
    </citation>
    <scope>NUCLEOTIDE SEQUENCE [MRNA] (ISOFORM 2)</scope>
</reference>
<reference key="3">
    <citation type="journal article" date="2000" name="DNA Res.">
        <title>Structural analysis of Arabidopsis thaliana chromosome 5. X. Sequence features of the regions of 3,076,755 bp covered by sixty P1 and TAC clones.</title>
        <authorList>
            <person name="Sato S."/>
            <person name="Nakamura Y."/>
            <person name="Kaneko T."/>
            <person name="Katoh T."/>
            <person name="Asamizu E."/>
            <person name="Kotani H."/>
            <person name="Tabata S."/>
        </authorList>
    </citation>
    <scope>NUCLEOTIDE SEQUENCE [LARGE SCALE GENOMIC DNA]</scope>
    <source>
        <strain>cv. Columbia</strain>
    </source>
</reference>
<reference key="4">
    <citation type="journal article" date="2017" name="Plant J.">
        <title>Araport11: a complete reannotation of the Arabidopsis thaliana reference genome.</title>
        <authorList>
            <person name="Cheng C.Y."/>
            <person name="Krishnakumar V."/>
            <person name="Chan A.P."/>
            <person name="Thibaud-Nissen F."/>
            <person name="Schobel S."/>
            <person name="Town C.D."/>
        </authorList>
    </citation>
    <scope>GENOME REANNOTATION</scope>
    <source>
        <strain>cv. Columbia</strain>
    </source>
</reference>
<reference key="5">
    <citation type="journal article" date="2003" name="Science">
        <title>Empirical analysis of transcriptional activity in the Arabidopsis genome.</title>
        <authorList>
            <person name="Yamada K."/>
            <person name="Lim J."/>
            <person name="Dale J.M."/>
            <person name="Chen H."/>
            <person name="Shinn P."/>
            <person name="Palm C.J."/>
            <person name="Southwick A.M."/>
            <person name="Wu H.C."/>
            <person name="Kim C.J."/>
            <person name="Nguyen M."/>
            <person name="Pham P.K."/>
            <person name="Cheuk R.F."/>
            <person name="Karlin-Newmann G."/>
            <person name="Liu S.X."/>
            <person name="Lam B."/>
            <person name="Sakano H."/>
            <person name="Wu T."/>
            <person name="Yu G."/>
            <person name="Miranda M."/>
            <person name="Quach H.L."/>
            <person name="Tripp M."/>
            <person name="Chang C.H."/>
            <person name="Lee J.M."/>
            <person name="Toriumi M.J."/>
            <person name="Chan M.M."/>
            <person name="Tang C.C."/>
            <person name="Onodera C.S."/>
            <person name="Deng J.M."/>
            <person name="Akiyama K."/>
            <person name="Ansari Y."/>
            <person name="Arakawa T."/>
            <person name="Banh J."/>
            <person name="Banno F."/>
            <person name="Bowser L."/>
            <person name="Brooks S.Y."/>
            <person name="Carninci P."/>
            <person name="Chao Q."/>
            <person name="Choy N."/>
            <person name="Enju A."/>
            <person name="Goldsmith A.D."/>
            <person name="Gurjal M."/>
            <person name="Hansen N.F."/>
            <person name="Hayashizaki Y."/>
            <person name="Johnson-Hopson C."/>
            <person name="Hsuan V.W."/>
            <person name="Iida K."/>
            <person name="Karnes M."/>
            <person name="Khan S."/>
            <person name="Koesema E."/>
            <person name="Ishida J."/>
            <person name="Jiang P.X."/>
            <person name="Jones T."/>
            <person name="Kawai J."/>
            <person name="Kamiya A."/>
            <person name="Meyers C."/>
            <person name="Nakajima M."/>
            <person name="Narusaka M."/>
            <person name="Seki M."/>
            <person name="Sakurai T."/>
            <person name="Satou M."/>
            <person name="Tamse R."/>
            <person name="Vaysberg M."/>
            <person name="Wallender E.K."/>
            <person name="Wong C."/>
            <person name="Yamamura Y."/>
            <person name="Yuan S."/>
            <person name="Shinozaki K."/>
            <person name="Davis R.W."/>
            <person name="Theologis A."/>
            <person name="Ecker J.R."/>
        </authorList>
    </citation>
    <scope>NUCLEOTIDE SEQUENCE [LARGE SCALE MRNA] (ISOFORM 1)</scope>
    <source>
        <strain>cv. Columbia</strain>
    </source>
</reference>
<reference key="6">
    <citation type="journal article" date="2007" name="Trends Plant Sci.">
        <title>Arabidopsis PPP family of serine/threonine phosphatases.</title>
        <authorList>
            <person name="Farkas I."/>
            <person name="Dombradi V."/>
            <person name="Miskei M."/>
            <person name="Szabados L."/>
            <person name="Koncz C."/>
        </authorList>
    </citation>
    <scope>GENE FAMILY</scope>
    <scope>NOMENCLATURE</scope>
</reference>
<reference key="7">
    <citation type="journal article" date="2009" name="Plant Physiol.">
        <title>Identification and functional characterization of inhibitor-3, a regulatory subunit of protein phosphatase 1 in plants.</title>
        <authorList>
            <person name="Takemiya A."/>
            <person name="Ariyoshi C."/>
            <person name="Shimazaki K."/>
        </authorList>
    </citation>
    <scope>SUBCELLULAR LOCATION</scope>
</reference>
<reference key="8">
    <citation type="journal article" date="2011" name="Biochem. J.">
        <title>Identification and characterization of AtI-2, an Arabidopsis homologue of an ancient protein phosphatase 1 (PP1) regulatory subunit.</title>
        <authorList>
            <person name="Templeton G.W."/>
            <person name="Nimick M."/>
            <person name="Morrice N."/>
            <person name="Campbell D."/>
            <person name="Goudreault M."/>
            <person name="Gingras A.C."/>
            <person name="Takemiya A."/>
            <person name="Shimazaki K."/>
            <person name="Moorhead G.B."/>
        </authorList>
    </citation>
    <scope>FUNCTION</scope>
    <scope>CATALYTIC ACTIVITY</scope>
    <scope>ACTIVITY REGULATION</scope>
</reference>
<organism>
    <name type="scientific">Arabidopsis thaliana</name>
    <name type="common">Mouse-ear cress</name>
    <dbReference type="NCBI Taxonomy" id="3702"/>
    <lineage>
        <taxon>Eukaryota</taxon>
        <taxon>Viridiplantae</taxon>
        <taxon>Streptophyta</taxon>
        <taxon>Embryophyta</taxon>
        <taxon>Tracheophyta</taxon>
        <taxon>Spermatophyta</taxon>
        <taxon>Magnoliopsida</taxon>
        <taxon>eudicotyledons</taxon>
        <taxon>Gunneridae</taxon>
        <taxon>Pentapetalae</taxon>
        <taxon>rosids</taxon>
        <taxon>malvids</taxon>
        <taxon>Brassicales</taxon>
        <taxon>Brassicaceae</taxon>
        <taxon>Camelineae</taxon>
        <taxon>Arabidopsis</taxon>
    </lineage>
</organism>
<evidence type="ECO:0000250" key="1"/>
<evidence type="ECO:0000250" key="2">
    <source>
        <dbReference type="UniProtKB" id="P48486"/>
    </source>
</evidence>
<evidence type="ECO:0000269" key="3">
    <source>
    </source>
</evidence>
<evidence type="ECO:0000269" key="4">
    <source>
    </source>
</evidence>
<evidence type="ECO:0000303" key="5">
    <source>
    </source>
</evidence>
<evidence type="ECO:0000303" key="6">
    <source>
    </source>
</evidence>
<evidence type="ECO:0000303" key="7">
    <source>
    </source>
</evidence>
<evidence type="ECO:0000305" key="8"/>
<evidence type="ECO:0000312" key="9">
    <source>
        <dbReference type="Araport" id="AT5G43380"/>
    </source>
</evidence>
<evidence type="ECO:0000312" key="10">
    <source>
        <dbReference type="EMBL" id="BAA97417.1"/>
    </source>
</evidence>
<proteinExistence type="evidence at protein level"/>
<name>PP17_ARATH</name>
<comment type="function">
    <text evidence="4">Serine/threonine-protein phosphatase that possesses phosphatase activity toward para-nitrophenyl phosphate (pNPP) in vitro.</text>
</comment>
<comment type="catalytic activity">
    <reaction evidence="4">
        <text>O-phospho-L-seryl-[protein] + H2O = L-seryl-[protein] + phosphate</text>
        <dbReference type="Rhea" id="RHEA:20629"/>
        <dbReference type="Rhea" id="RHEA-COMP:9863"/>
        <dbReference type="Rhea" id="RHEA-COMP:11604"/>
        <dbReference type="ChEBI" id="CHEBI:15377"/>
        <dbReference type="ChEBI" id="CHEBI:29999"/>
        <dbReference type="ChEBI" id="CHEBI:43474"/>
        <dbReference type="ChEBI" id="CHEBI:83421"/>
        <dbReference type="EC" id="3.1.3.16"/>
    </reaction>
</comment>
<comment type="catalytic activity">
    <reaction evidence="4">
        <text>O-phospho-L-threonyl-[protein] + H2O = L-threonyl-[protein] + phosphate</text>
        <dbReference type="Rhea" id="RHEA:47004"/>
        <dbReference type="Rhea" id="RHEA-COMP:11060"/>
        <dbReference type="Rhea" id="RHEA-COMP:11605"/>
        <dbReference type="ChEBI" id="CHEBI:15377"/>
        <dbReference type="ChEBI" id="CHEBI:30013"/>
        <dbReference type="ChEBI" id="CHEBI:43474"/>
        <dbReference type="ChEBI" id="CHEBI:61977"/>
        <dbReference type="EC" id="3.1.3.16"/>
    </reaction>
</comment>
<comment type="cofactor">
    <cofactor evidence="1">
        <name>Mn(2+)</name>
        <dbReference type="ChEBI" id="CHEBI:29035"/>
    </cofactor>
    <text evidence="1">Binds 2 manganese ions per subunit.</text>
</comment>
<comment type="activity regulation">
    <text evidence="4">Phosphatase activity is strongly reduced by the protein phosphatase inhibitor 2 (I-2).</text>
</comment>
<comment type="subcellular location">
    <subcellularLocation>
        <location evidence="3">Nucleus</location>
    </subcellularLocation>
    <subcellularLocation>
        <location evidence="3">Cytoplasm</location>
    </subcellularLocation>
</comment>
<comment type="alternative products">
    <event type="alternative splicing"/>
    <isoform>
        <id>O82733-1</id>
        <name>1</name>
        <sequence type="displayed"/>
    </isoform>
    <isoform>
        <id>O82733-2</id>
        <name>2</name>
        <sequence type="described" ref="VSP_009006"/>
    </isoform>
    <isoform>
        <id>O82733-3</id>
        <name>3</name>
        <sequence type="described" ref="VSP_028726"/>
    </isoform>
</comment>
<comment type="tissue specificity">
    <text>Expressed in roots, rosettes and flowers.</text>
</comment>
<comment type="similarity">
    <text evidence="8">Belongs to the PPP phosphatase family. PP-1 subfamily.</text>
</comment>
<comment type="sequence caution" evidence="8">
    <conflict type="frameshift">
        <sequence resource="EMBL-CDS" id="AAC39459"/>
    </conflict>
</comment>
<gene>
    <name evidence="5" type="primary">TOPP7</name>
    <name evidence="6" type="synonym">TOPP6</name>
    <name evidence="9" type="ordered locus">At5g43380</name>
    <name evidence="10" type="ORF">MWF20.7</name>
</gene>
<feature type="chain" id="PRO_0000058803" description="Serine/threonine-protein phosphatase PP1 isozyme 7">
    <location>
        <begin position="1"/>
        <end position="331"/>
    </location>
</feature>
<feature type="active site" description="Proton donor" evidence="1">
    <location>
        <position position="121"/>
    </location>
</feature>
<feature type="binding site" evidence="1">
    <location>
        <position position="60"/>
    </location>
    <ligand>
        <name>Mn(2+)</name>
        <dbReference type="ChEBI" id="CHEBI:29035"/>
        <label>1</label>
    </ligand>
</feature>
<feature type="binding site" evidence="1">
    <location>
        <position position="62"/>
    </location>
    <ligand>
        <name>Mn(2+)</name>
        <dbReference type="ChEBI" id="CHEBI:29035"/>
        <label>1</label>
    </ligand>
</feature>
<feature type="binding site" evidence="1">
    <location>
        <position position="88"/>
    </location>
    <ligand>
        <name>Mn(2+)</name>
        <dbReference type="ChEBI" id="CHEBI:29035"/>
        <label>1</label>
    </ligand>
</feature>
<feature type="binding site" evidence="1">
    <location>
        <position position="88"/>
    </location>
    <ligand>
        <name>Mn(2+)</name>
        <dbReference type="ChEBI" id="CHEBI:29035"/>
        <label>2</label>
    </ligand>
</feature>
<feature type="binding site" evidence="1">
    <location>
        <position position="120"/>
    </location>
    <ligand>
        <name>Mn(2+)</name>
        <dbReference type="ChEBI" id="CHEBI:29035"/>
        <label>2</label>
    </ligand>
</feature>
<feature type="binding site" evidence="1">
    <location>
        <position position="169"/>
    </location>
    <ligand>
        <name>Mn(2+)</name>
        <dbReference type="ChEBI" id="CHEBI:29035"/>
        <label>2</label>
    </ligand>
</feature>
<feature type="binding site" evidence="1">
    <location>
        <position position="244"/>
    </location>
    <ligand>
        <name>Mn(2+)</name>
        <dbReference type="ChEBI" id="CHEBI:29035"/>
        <label>2</label>
    </ligand>
</feature>
<feature type="modified residue" description="N-acetylmethionine" evidence="2">
    <location>
        <position position="1"/>
    </location>
</feature>
<feature type="splice variant" id="VSP_009006" description="In isoform 2." evidence="7">
    <original>SILSSQNSKEYN</original>
    <variation>VCINHITF</variation>
    <location>
        <begin position="320"/>
        <end position="331"/>
    </location>
</feature>
<feature type="splice variant" id="VSP_028726" description="In isoform 3." evidence="8">
    <original>SILSSQNSKEYN</original>
    <variation>DCNW</variation>
    <location>
        <begin position="320"/>
        <end position="331"/>
    </location>
</feature>
<feature type="sequence conflict" description="In Ref. 2; AAC39459." evidence="8" ref="2">
    <original>N</original>
    <variation>I</variation>
    <location>
        <position position="7"/>
    </location>
</feature>
<feature type="sequence conflict" description="In Ref. 2; AAC39459." evidence="8" ref="2">
    <original>G</original>
    <variation>E</variation>
    <location>
        <position position="76"/>
    </location>
</feature>
<feature type="sequence conflict" description="In Ref. 2; AAC39459." evidence="8" ref="2">
    <location>
        <position position="84"/>
    </location>
</feature>